<sequence>MSLFDWFADRRKGQYVGKVNQEPDEGDGLWSKCPECGQVVYRKDLLSNASVCGNCGYHHRIDSTERIAVLVDPNSFVPMDQELQPTDPLGFKDRRAYADRLRETQASTGLRDGVITGLCEVEGIPMALAVMDFRFMGGSMGSVVGEKITRLVEVATAKKLPLLIVCASGGARMQEGMLSLMQMAKISGALERHREAGVLYMPLLTHPTTGGVTASFAMLGDLILAEPKALIGFAGRRVIEQTLREKLPDNFQTAEYLQEHGFVDSIVPRTQLRSTLASLLRLHGCESRVASS</sequence>
<reference key="1">
    <citation type="journal article" date="2006" name="Proc. Natl. Acad. Sci. U.S.A.">
        <title>Genome sequence of Synechococcus CC9311: insights into adaptation to a coastal environment.</title>
        <authorList>
            <person name="Palenik B."/>
            <person name="Ren Q."/>
            <person name="Dupont C.L."/>
            <person name="Myers G.S."/>
            <person name="Heidelberg J.F."/>
            <person name="Badger J.H."/>
            <person name="Madupu R."/>
            <person name="Nelson W.C."/>
            <person name="Brinkac L.M."/>
            <person name="Dodson R.J."/>
            <person name="Durkin A.S."/>
            <person name="Daugherty S.C."/>
            <person name="Sullivan S.A."/>
            <person name="Khouri H."/>
            <person name="Mohamoud Y."/>
            <person name="Halpin R."/>
            <person name="Paulsen I.T."/>
        </authorList>
    </citation>
    <scope>NUCLEOTIDE SEQUENCE [LARGE SCALE GENOMIC DNA]</scope>
    <source>
        <strain>CC9311</strain>
    </source>
</reference>
<feature type="chain" id="PRO_0000359074" description="Acetyl-coenzyme A carboxylase carboxyl transferase subunit beta">
    <location>
        <begin position="1"/>
        <end position="292"/>
    </location>
</feature>
<feature type="domain" description="CoA carboxyltransferase N-terminal" evidence="2">
    <location>
        <begin position="29"/>
        <end position="292"/>
    </location>
</feature>
<feature type="zinc finger region" description="C4-type" evidence="1">
    <location>
        <begin position="33"/>
        <end position="55"/>
    </location>
</feature>
<feature type="binding site" evidence="1">
    <location>
        <position position="33"/>
    </location>
    <ligand>
        <name>Zn(2+)</name>
        <dbReference type="ChEBI" id="CHEBI:29105"/>
    </ligand>
</feature>
<feature type="binding site" evidence="1">
    <location>
        <position position="36"/>
    </location>
    <ligand>
        <name>Zn(2+)</name>
        <dbReference type="ChEBI" id="CHEBI:29105"/>
    </ligand>
</feature>
<feature type="binding site" evidence="1">
    <location>
        <position position="52"/>
    </location>
    <ligand>
        <name>Zn(2+)</name>
        <dbReference type="ChEBI" id="CHEBI:29105"/>
    </ligand>
</feature>
<feature type="binding site" evidence="1">
    <location>
        <position position="55"/>
    </location>
    <ligand>
        <name>Zn(2+)</name>
        <dbReference type="ChEBI" id="CHEBI:29105"/>
    </ligand>
</feature>
<evidence type="ECO:0000255" key="1">
    <source>
        <dbReference type="HAMAP-Rule" id="MF_01395"/>
    </source>
</evidence>
<evidence type="ECO:0000255" key="2">
    <source>
        <dbReference type="PROSITE-ProRule" id="PRU01136"/>
    </source>
</evidence>
<name>ACCD_SYNS3</name>
<organism>
    <name type="scientific">Synechococcus sp. (strain CC9311)</name>
    <dbReference type="NCBI Taxonomy" id="64471"/>
    <lineage>
        <taxon>Bacteria</taxon>
        <taxon>Bacillati</taxon>
        <taxon>Cyanobacteriota</taxon>
        <taxon>Cyanophyceae</taxon>
        <taxon>Synechococcales</taxon>
        <taxon>Synechococcaceae</taxon>
        <taxon>Synechococcus</taxon>
    </lineage>
</organism>
<accession>Q0I9G1</accession>
<comment type="function">
    <text evidence="1">Component of the acetyl coenzyme A carboxylase (ACC) complex. Biotin carboxylase (BC) catalyzes the carboxylation of biotin on its carrier protein (BCCP) and then the CO(2) group is transferred by the transcarboxylase to acetyl-CoA to form malonyl-CoA.</text>
</comment>
<comment type="catalytic activity">
    <reaction evidence="1">
        <text>N(6)-carboxybiotinyl-L-lysyl-[protein] + acetyl-CoA = N(6)-biotinyl-L-lysyl-[protein] + malonyl-CoA</text>
        <dbReference type="Rhea" id="RHEA:54728"/>
        <dbReference type="Rhea" id="RHEA-COMP:10505"/>
        <dbReference type="Rhea" id="RHEA-COMP:10506"/>
        <dbReference type="ChEBI" id="CHEBI:57288"/>
        <dbReference type="ChEBI" id="CHEBI:57384"/>
        <dbReference type="ChEBI" id="CHEBI:83144"/>
        <dbReference type="ChEBI" id="CHEBI:83145"/>
        <dbReference type="EC" id="2.1.3.15"/>
    </reaction>
</comment>
<comment type="cofactor">
    <cofactor evidence="1">
        <name>Zn(2+)</name>
        <dbReference type="ChEBI" id="CHEBI:29105"/>
    </cofactor>
    <text evidence="1">Binds 1 zinc ion per subunit.</text>
</comment>
<comment type="pathway">
    <text evidence="1">Lipid metabolism; malonyl-CoA biosynthesis; malonyl-CoA from acetyl-CoA: step 1/1.</text>
</comment>
<comment type="subunit">
    <text evidence="1">Acetyl-CoA carboxylase is a heterohexamer composed of biotin carboxyl carrier protein (AccB), biotin carboxylase (AccC) and two subunits each of ACCase subunit alpha (AccA) and ACCase subunit beta (AccD).</text>
</comment>
<comment type="subcellular location">
    <subcellularLocation>
        <location evidence="1">Cytoplasm</location>
    </subcellularLocation>
</comment>
<comment type="similarity">
    <text evidence="1">Belongs to the AccD/PCCB family.</text>
</comment>
<protein>
    <recommendedName>
        <fullName evidence="1">Acetyl-coenzyme A carboxylase carboxyl transferase subunit beta</fullName>
        <shortName evidence="1">ACCase subunit beta</shortName>
        <shortName evidence="1">Acetyl-CoA carboxylase carboxyltransferase subunit beta</shortName>
        <ecNumber evidence="1">2.1.3.15</ecNumber>
    </recommendedName>
</protein>
<gene>
    <name evidence="1" type="primary">accD</name>
    <name type="ordered locus">sync_1707</name>
</gene>
<dbReference type="EC" id="2.1.3.15" evidence="1"/>
<dbReference type="EMBL" id="CP000435">
    <property type="protein sequence ID" value="ABI47081.1"/>
    <property type="molecule type" value="Genomic_DNA"/>
</dbReference>
<dbReference type="RefSeq" id="WP_011619624.1">
    <property type="nucleotide sequence ID" value="NC_008319.1"/>
</dbReference>
<dbReference type="SMR" id="Q0I9G1"/>
<dbReference type="STRING" id="64471.sync_1707"/>
<dbReference type="KEGG" id="syg:sync_1707"/>
<dbReference type="eggNOG" id="COG0777">
    <property type="taxonomic scope" value="Bacteria"/>
</dbReference>
<dbReference type="HOGENOM" id="CLU_015486_1_1_3"/>
<dbReference type="OrthoDB" id="9772975at2"/>
<dbReference type="UniPathway" id="UPA00655">
    <property type="reaction ID" value="UER00711"/>
</dbReference>
<dbReference type="Proteomes" id="UP000001961">
    <property type="component" value="Chromosome"/>
</dbReference>
<dbReference type="GO" id="GO:0009317">
    <property type="term" value="C:acetyl-CoA carboxylase complex"/>
    <property type="evidence" value="ECO:0007669"/>
    <property type="project" value="InterPro"/>
</dbReference>
<dbReference type="GO" id="GO:0003989">
    <property type="term" value="F:acetyl-CoA carboxylase activity"/>
    <property type="evidence" value="ECO:0007669"/>
    <property type="project" value="InterPro"/>
</dbReference>
<dbReference type="GO" id="GO:0005524">
    <property type="term" value="F:ATP binding"/>
    <property type="evidence" value="ECO:0007669"/>
    <property type="project" value="UniProtKB-KW"/>
</dbReference>
<dbReference type="GO" id="GO:0016743">
    <property type="term" value="F:carboxyl- or carbamoyltransferase activity"/>
    <property type="evidence" value="ECO:0007669"/>
    <property type="project" value="UniProtKB-UniRule"/>
</dbReference>
<dbReference type="GO" id="GO:0008270">
    <property type="term" value="F:zinc ion binding"/>
    <property type="evidence" value="ECO:0007669"/>
    <property type="project" value="UniProtKB-UniRule"/>
</dbReference>
<dbReference type="GO" id="GO:0006633">
    <property type="term" value="P:fatty acid biosynthetic process"/>
    <property type="evidence" value="ECO:0007669"/>
    <property type="project" value="UniProtKB-KW"/>
</dbReference>
<dbReference type="GO" id="GO:2001295">
    <property type="term" value="P:malonyl-CoA biosynthetic process"/>
    <property type="evidence" value="ECO:0007669"/>
    <property type="project" value="UniProtKB-UniRule"/>
</dbReference>
<dbReference type="Gene3D" id="3.90.226.10">
    <property type="entry name" value="2-enoyl-CoA Hydratase, Chain A, domain 1"/>
    <property type="match status" value="1"/>
</dbReference>
<dbReference type="HAMAP" id="MF_01395">
    <property type="entry name" value="AcetylCoA_CT_beta"/>
    <property type="match status" value="1"/>
</dbReference>
<dbReference type="InterPro" id="IPR034733">
    <property type="entry name" value="AcCoA_carboxyl_beta"/>
</dbReference>
<dbReference type="InterPro" id="IPR000438">
    <property type="entry name" value="Acetyl_CoA_COase_Trfase_b_su"/>
</dbReference>
<dbReference type="InterPro" id="IPR029045">
    <property type="entry name" value="ClpP/crotonase-like_dom_sf"/>
</dbReference>
<dbReference type="InterPro" id="IPR011762">
    <property type="entry name" value="COA_CT_N"/>
</dbReference>
<dbReference type="InterPro" id="IPR041010">
    <property type="entry name" value="Znf-ACC"/>
</dbReference>
<dbReference type="NCBIfam" id="TIGR00515">
    <property type="entry name" value="accD"/>
    <property type="match status" value="1"/>
</dbReference>
<dbReference type="PANTHER" id="PTHR42995">
    <property type="entry name" value="ACETYL-COENZYME A CARBOXYLASE CARBOXYL TRANSFERASE SUBUNIT BETA, CHLOROPLASTIC"/>
    <property type="match status" value="1"/>
</dbReference>
<dbReference type="PANTHER" id="PTHR42995:SF5">
    <property type="entry name" value="ACETYL-COENZYME A CARBOXYLASE CARBOXYL TRANSFERASE SUBUNIT BETA, CHLOROPLASTIC"/>
    <property type="match status" value="1"/>
</dbReference>
<dbReference type="Pfam" id="PF01039">
    <property type="entry name" value="Carboxyl_trans"/>
    <property type="match status" value="1"/>
</dbReference>
<dbReference type="Pfam" id="PF17848">
    <property type="entry name" value="Zn_ribbon_ACC"/>
    <property type="match status" value="1"/>
</dbReference>
<dbReference type="PRINTS" id="PR01070">
    <property type="entry name" value="ACCCTRFRASEB"/>
</dbReference>
<dbReference type="SUPFAM" id="SSF52096">
    <property type="entry name" value="ClpP/crotonase"/>
    <property type="match status" value="1"/>
</dbReference>
<dbReference type="PROSITE" id="PS50980">
    <property type="entry name" value="COA_CT_NTER"/>
    <property type="match status" value="1"/>
</dbReference>
<proteinExistence type="inferred from homology"/>
<keyword id="KW-0067">ATP-binding</keyword>
<keyword id="KW-0963">Cytoplasm</keyword>
<keyword id="KW-0275">Fatty acid biosynthesis</keyword>
<keyword id="KW-0276">Fatty acid metabolism</keyword>
<keyword id="KW-0444">Lipid biosynthesis</keyword>
<keyword id="KW-0443">Lipid metabolism</keyword>
<keyword id="KW-0479">Metal-binding</keyword>
<keyword id="KW-0547">Nucleotide-binding</keyword>
<keyword id="KW-1185">Reference proteome</keyword>
<keyword id="KW-0808">Transferase</keyword>
<keyword id="KW-0862">Zinc</keyword>
<keyword id="KW-0863">Zinc-finger</keyword>